<keyword id="KW-0325">Glycoprotein</keyword>
<keyword id="KW-1185">Reference proteome</keyword>
<keyword id="KW-0732">Signal</keyword>
<protein>
    <recommendedName>
        <fullName>Putative uncharacterized protein DDB_G0280709</fullName>
    </recommendedName>
</protein>
<evidence type="ECO:0000255" key="1"/>
<evidence type="ECO:0000305" key="2"/>
<feature type="signal peptide" evidence="1">
    <location>
        <begin position="1"/>
        <end position="20"/>
    </location>
</feature>
<feature type="chain" id="PRO_0000352454" description="Putative uncharacterized protein DDB_G0280709">
    <location>
        <begin position="21"/>
        <end position="142"/>
    </location>
</feature>
<feature type="glycosylation site" description="N-linked (GlcNAc...) asparagine" evidence="1">
    <location>
        <position position="80"/>
    </location>
</feature>
<organism>
    <name type="scientific">Dictyostelium discoideum</name>
    <name type="common">Social amoeba</name>
    <dbReference type="NCBI Taxonomy" id="44689"/>
    <lineage>
        <taxon>Eukaryota</taxon>
        <taxon>Amoebozoa</taxon>
        <taxon>Evosea</taxon>
        <taxon>Eumycetozoa</taxon>
        <taxon>Dictyostelia</taxon>
        <taxon>Dictyosteliales</taxon>
        <taxon>Dictyosteliaceae</taxon>
        <taxon>Dictyostelium</taxon>
    </lineage>
</organism>
<sequence length="142" mass="16254">MPSVNEFFIFFLIVWHTCECVGIGFEHLHLVIYLNLNLQNVRFYLMKLINHLIIEKSSLHLLISTIHSFIDILLSDFKCNSSTRKCTTGMSVDISKIYTAEYGHLKAKLDTIGGLYCDSKDVTIMKVYVLVPLTIVLNIQVL</sequence>
<dbReference type="EMBL" id="AAFI02000037">
    <property type="protein sequence ID" value="EAL67156.1"/>
    <property type="status" value="ALT_SEQ"/>
    <property type="molecule type" value="Genomic_DNA"/>
</dbReference>
<dbReference type="RefSeq" id="XP_641136.1">
    <property type="nucleotide sequence ID" value="XM_636044.1"/>
</dbReference>
<dbReference type="SMR" id="Q54UZ5"/>
<dbReference type="GlyGen" id="Q54UZ5">
    <property type="glycosylation" value="1 site"/>
</dbReference>
<dbReference type="PaxDb" id="44689-DDB0206140"/>
<dbReference type="EnsemblProtists" id="EAL67156">
    <property type="protein sequence ID" value="EAL67156"/>
    <property type="gene ID" value="DDB_G0280709"/>
</dbReference>
<dbReference type="GeneID" id="8622694"/>
<dbReference type="KEGG" id="ddi:DDB_G0280709"/>
<dbReference type="dictyBase" id="DDB_G0280709"/>
<dbReference type="VEuPathDB" id="AmoebaDB:DDB_G0280709"/>
<dbReference type="InParanoid" id="Q54UZ5"/>
<dbReference type="PRO" id="PR:Q54UZ5"/>
<dbReference type="Proteomes" id="UP000002195">
    <property type="component" value="Chromosome 3"/>
</dbReference>
<proteinExistence type="inferred from homology"/>
<reference key="1">
    <citation type="journal article" date="2005" name="Nature">
        <title>The genome of the social amoeba Dictyostelium discoideum.</title>
        <authorList>
            <person name="Eichinger L."/>
            <person name="Pachebat J.A."/>
            <person name="Gloeckner G."/>
            <person name="Rajandream M.A."/>
            <person name="Sucgang R."/>
            <person name="Berriman M."/>
            <person name="Song J."/>
            <person name="Olsen R."/>
            <person name="Szafranski K."/>
            <person name="Xu Q."/>
            <person name="Tunggal B."/>
            <person name="Kummerfeld S."/>
            <person name="Madera M."/>
            <person name="Konfortov B.A."/>
            <person name="Rivero F."/>
            <person name="Bankier A.T."/>
            <person name="Lehmann R."/>
            <person name="Hamlin N."/>
            <person name="Davies R."/>
            <person name="Gaudet P."/>
            <person name="Fey P."/>
            <person name="Pilcher K."/>
            <person name="Chen G."/>
            <person name="Saunders D."/>
            <person name="Sodergren E.J."/>
            <person name="Davis P."/>
            <person name="Kerhornou A."/>
            <person name="Nie X."/>
            <person name="Hall N."/>
            <person name="Anjard C."/>
            <person name="Hemphill L."/>
            <person name="Bason N."/>
            <person name="Farbrother P."/>
            <person name="Desany B."/>
            <person name="Just E."/>
            <person name="Morio T."/>
            <person name="Rost R."/>
            <person name="Churcher C.M."/>
            <person name="Cooper J."/>
            <person name="Haydock S."/>
            <person name="van Driessche N."/>
            <person name="Cronin A."/>
            <person name="Goodhead I."/>
            <person name="Muzny D.M."/>
            <person name="Mourier T."/>
            <person name="Pain A."/>
            <person name="Lu M."/>
            <person name="Harper D."/>
            <person name="Lindsay R."/>
            <person name="Hauser H."/>
            <person name="James K.D."/>
            <person name="Quiles M."/>
            <person name="Madan Babu M."/>
            <person name="Saito T."/>
            <person name="Buchrieser C."/>
            <person name="Wardroper A."/>
            <person name="Felder M."/>
            <person name="Thangavelu M."/>
            <person name="Johnson D."/>
            <person name="Knights A."/>
            <person name="Loulseged H."/>
            <person name="Mungall K.L."/>
            <person name="Oliver K."/>
            <person name="Price C."/>
            <person name="Quail M.A."/>
            <person name="Urushihara H."/>
            <person name="Hernandez J."/>
            <person name="Rabbinowitsch E."/>
            <person name="Steffen D."/>
            <person name="Sanders M."/>
            <person name="Ma J."/>
            <person name="Kohara Y."/>
            <person name="Sharp S."/>
            <person name="Simmonds M.N."/>
            <person name="Spiegler S."/>
            <person name="Tivey A."/>
            <person name="Sugano S."/>
            <person name="White B."/>
            <person name="Walker D."/>
            <person name="Woodward J.R."/>
            <person name="Winckler T."/>
            <person name="Tanaka Y."/>
            <person name="Shaulsky G."/>
            <person name="Schleicher M."/>
            <person name="Weinstock G.M."/>
            <person name="Rosenthal A."/>
            <person name="Cox E.C."/>
            <person name="Chisholm R.L."/>
            <person name="Gibbs R.A."/>
            <person name="Loomis W.F."/>
            <person name="Platzer M."/>
            <person name="Kay R.R."/>
            <person name="Williams J.G."/>
            <person name="Dear P.H."/>
            <person name="Noegel A.A."/>
            <person name="Barrell B.G."/>
            <person name="Kuspa A."/>
        </authorList>
    </citation>
    <scope>NUCLEOTIDE SEQUENCE [LARGE SCALE GENOMIC DNA]</scope>
    <source>
        <strain>AX4</strain>
    </source>
</reference>
<gene>
    <name type="ORF">DDB_G0280709</name>
</gene>
<comment type="sequence caution" evidence="2">
    <conflict type="erroneous gene model prediction">
        <sequence resource="EMBL-CDS" id="EAL67156"/>
    </conflict>
</comment>
<name>Y0614_DICDI</name>
<accession>Q54UZ5</accession>